<organism>
    <name type="scientific">Colwellia psychrerythraea (strain 34H / ATCC BAA-681)</name>
    <name type="common">Vibrio psychroerythus</name>
    <dbReference type="NCBI Taxonomy" id="167879"/>
    <lineage>
        <taxon>Bacteria</taxon>
        <taxon>Pseudomonadati</taxon>
        <taxon>Pseudomonadota</taxon>
        <taxon>Gammaproteobacteria</taxon>
        <taxon>Alteromonadales</taxon>
        <taxon>Colwelliaceae</taxon>
        <taxon>Colwellia</taxon>
    </lineage>
</organism>
<gene>
    <name evidence="1" type="primary">dnaA</name>
    <name type="ordered locus">CPS_0001</name>
</gene>
<keyword id="KW-0067">ATP-binding</keyword>
<keyword id="KW-0963">Cytoplasm</keyword>
<keyword id="KW-0235">DNA replication</keyword>
<keyword id="KW-0238">DNA-binding</keyword>
<keyword id="KW-0446">Lipid-binding</keyword>
<keyword id="KW-0547">Nucleotide-binding</keyword>
<feature type="chain" id="PRO_1000048639" description="Chromosomal replication initiator protein DnaA">
    <location>
        <begin position="1"/>
        <end position="461"/>
    </location>
</feature>
<feature type="region of interest" description="Domain I, interacts with DnaA modulators" evidence="1">
    <location>
        <begin position="1"/>
        <end position="83"/>
    </location>
</feature>
<feature type="region of interest" description="Domain II" evidence="1">
    <location>
        <begin position="83"/>
        <end position="124"/>
    </location>
</feature>
<feature type="region of interest" description="Domain III, AAA+ region" evidence="1">
    <location>
        <begin position="125"/>
        <end position="341"/>
    </location>
</feature>
<feature type="region of interest" description="Domain IV, binds dsDNA" evidence="1">
    <location>
        <begin position="342"/>
        <end position="461"/>
    </location>
</feature>
<feature type="binding site" evidence="1">
    <location>
        <position position="169"/>
    </location>
    <ligand>
        <name>ATP</name>
        <dbReference type="ChEBI" id="CHEBI:30616"/>
    </ligand>
</feature>
<feature type="binding site" evidence="1">
    <location>
        <position position="171"/>
    </location>
    <ligand>
        <name>ATP</name>
        <dbReference type="ChEBI" id="CHEBI:30616"/>
    </ligand>
</feature>
<feature type="binding site" evidence="1">
    <location>
        <position position="172"/>
    </location>
    <ligand>
        <name>ATP</name>
        <dbReference type="ChEBI" id="CHEBI:30616"/>
    </ligand>
</feature>
<feature type="binding site" evidence="1">
    <location>
        <position position="173"/>
    </location>
    <ligand>
        <name>ATP</name>
        <dbReference type="ChEBI" id="CHEBI:30616"/>
    </ligand>
</feature>
<comment type="function">
    <text evidence="1">Plays an essential role in the initiation and regulation of chromosomal replication. ATP-DnaA binds to the origin of replication (oriC) to initiate formation of the DNA replication initiation complex once per cell cycle. Binds the DnaA box (a 9 base pair repeat at the origin) and separates the double-stranded (ds)DNA. Forms a right-handed helical filament on oriC DNA; dsDNA binds to the exterior of the filament while single-stranded (ss)DNA is stabiized in the filament's interior. The ATP-DnaA-oriC complex binds and stabilizes one strand of the AT-rich DNA unwinding element (DUE), permitting loading of DNA polymerase. After initiation quickly degrades to an ADP-DnaA complex that is not apt for DNA replication. Binds acidic phospholipids.</text>
</comment>
<comment type="subunit">
    <text evidence="1">Oligomerizes as a right-handed, spiral filament on DNA at oriC.</text>
</comment>
<comment type="subcellular location">
    <subcellularLocation>
        <location evidence="1">Cytoplasm</location>
    </subcellularLocation>
</comment>
<comment type="domain">
    <text evidence="1">Domain I is involved in oligomerization and binding regulators, domain II is flexibile and of varying length in different bacteria, domain III forms the AAA+ region, while domain IV binds dsDNA.</text>
</comment>
<comment type="similarity">
    <text evidence="1">Belongs to the DnaA family.</text>
</comment>
<dbReference type="EMBL" id="CP000083">
    <property type="protein sequence ID" value="AAZ24481.1"/>
    <property type="molecule type" value="Genomic_DNA"/>
</dbReference>
<dbReference type="RefSeq" id="WP_011040891.1">
    <property type="nucleotide sequence ID" value="NC_003910.7"/>
</dbReference>
<dbReference type="SMR" id="Q48AS7"/>
<dbReference type="STRING" id="167879.CPS_0001"/>
<dbReference type="KEGG" id="cps:CPS_0001"/>
<dbReference type="eggNOG" id="COG0593">
    <property type="taxonomic scope" value="Bacteria"/>
</dbReference>
<dbReference type="HOGENOM" id="CLU_026910_0_1_6"/>
<dbReference type="Proteomes" id="UP000000547">
    <property type="component" value="Chromosome"/>
</dbReference>
<dbReference type="GO" id="GO:0005737">
    <property type="term" value="C:cytoplasm"/>
    <property type="evidence" value="ECO:0007669"/>
    <property type="project" value="UniProtKB-SubCell"/>
</dbReference>
<dbReference type="GO" id="GO:0005886">
    <property type="term" value="C:plasma membrane"/>
    <property type="evidence" value="ECO:0007669"/>
    <property type="project" value="TreeGrafter"/>
</dbReference>
<dbReference type="GO" id="GO:0005524">
    <property type="term" value="F:ATP binding"/>
    <property type="evidence" value="ECO:0007669"/>
    <property type="project" value="UniProtKB-UniRule"/>
</dbReference>
<dbReference type="GO" id="GO:0016887">
    <property type="term" value="F:ATP hydrolysis activity"/>
    <property type="evidence" value="ECO:0007669"/>
    <property type="project" value="InterPro"/>
</dbReference>
<dbReference type="GO" id="GO:0003688">
    <property type="term" value="F:DNA replication origin binding"/>
    <property type="evidence" value="ECO:0007669"/>
    <property type="project" value="UniProtKB-UniRule"/>
</dbReference>
<dbReference type="GO" id="GO:0008289">
    <property type="term" value="F:lipid binding"/>
    <property type="evidence" value="ECO:0007669"/>
    <property type="project" value="UniProtKB-KW"/>
</dbReference>
<dbReference type="GO" id="GO:0006270">
    <property type="term" value="P:DNA replication initiation"/>
    <property type="evidence" value="ECO:0007669"/>
    <property type="project" value="UniProtKB-UniRule"/>
</dbReference>
<dbReference type="GO" id="GO:0006275">
    <property type="term" value="P:regulation of DNA replication"/>
    <property type="evidence" value="ECO:0007669"/>
    <property type="project" value="UniProtKB-UniRule"/>
</dbReference>
<dbReference type="CDD" id="cd00009">
    <property type="entry name" value="AAA"/>
    <property type="match status" value="1"/>
</dbReference>
<dbReference type="CDD" id="cd06571">
    <property type="entry name" value="Bac_DnaA_C"/>
    <property type="match status" value="1"/>
</dbReference>
<dbReference type="FunFam" id="1.10.1750.10:FF:000001">
    <property type="entry name" value="Chromosomal replication initiator protein DnaA"/>
    <property type="match status" value="1"/>
</dbReference>
<dbReference type="FunFam" id="1.10.8.60:FF:000003">
    <property type="entry name" value="Chromosomal replication initiator protein DnaA"/>
    <property type="match status" value="1"/>
</dbReference>
<dbReference type="FunFam" id="3.40.50.300:FF:000103">
    <property type="entry name" value="Chromosomal replication initiator protein DnaA"/>
    <property type="match status" value="1"/>
</dbReference>
<dbReference type="Gene3D" id="1.10.1750.10">
    <property type="match status" value="1"/>
</dbReference>
<dbReference type="Gene3D" id="1.10.8.60">
    <property type="match status" value="1"/>
</dbReference>
<dbReference type="Gene3D" id="3.30.300.180">
    <property type="match status" value="1"/>
</dbReference>
<dbReference type="Gene3D" id="3.40.50.300">
    <property type="entry name" value="P-loop containing nucleotide triphosphate hydrolases"/>
    <property type="match status" value="1"/>
</dbReference>
<dbReference type="HAMAP" id="MF_00377">
    <property type="entry name" value="DnaA_bact"/>
    <property type="match status" value="1"/>
</dbReference>
<dbReference type="InterPro" id="IPR003593">
    <property type="entry name" value="AAA+_ATPase"/>
</dbReference>
<dbReference type="InterPro" id="IPR001957">
    <property type="entry name" value="Chromosome_initiator_DnaA"/>
</dbReference>
<dbReference type="InterPro" id="IPR020591">
    <property type="entry name" value="Chromosome_initiator_DnaA-like"/>
</dbReference>
<dbReference type="InterPro" id="IPR018312">
    <property type="entry name" value="Chromosome_initiator_DnaA_CS"/>
</dbReference>
<dbReference type="InterPro" id="IPR013159">
    <property type="entry name" value="DnaA_C"/>
</dbReference>
<dbReference type="InterPro" id="IPR013317">
    <property type="entry name" value="DnaA_dom"/>
</dbReference>
<dbReference type="InterPro" id="IPR024633">
    <property type="entry name" value="DnaA_N_dom"/>
</dbReference>
<dbReference type="InterPro" id="IPR038454">
    <property type="entry name" value="DnaA_N_sf"/>
</dbReference>
<dbReference type="InterPro" id="IPR055199">
    <property type="entry name" value="Hda_lid"/>
</dbReference>
<dbReference type="InterPro" id="IPR027417">
    <property type="entry name" value="P-loop_NTPase"/>
</dbReference>
<dbReference type="InterPro" id="IPR010921">
    <property type="entry name" value="Trp_repressor/repl_initiator"/>
</dbReference>
<dbReference type="NCBIfam" id="TIGR00362">
    <property type="entry name" value="DnaA"/>
    <property type="match status" value="1"/>
</dbReference>
<dbReference type="PANTHER" id="PTHR30050">
    <property type="entry name" value="CHROMOSOMAL REPLICATION INITIATOR PROTEIN DNAA"/>
    <property type="match status" value="1"/>
</dbReference>
<dbReference type="PANTHER" id="PTHR30050:SF2">
    <property type="entry name" value="CHROMOSOMAL REPLICATION INITIATOR PROTEIN DNAA"/>
    <property type="match status" value="1"/>
</dbReference>
<dbReference type="Pfam" id="PF00308">
    <property type="entry name" value="Bac_DnaA"/>
    <property type="match status" value="1"/>
</dbReference>
<dbReference type="Pfam" id="PF08299">
    <property type="entry name" value="Bac_DnaA_C"/>
    <property type="match status" value="1"/>
</dbReference>
<dbReference type="Pfam" id="PF11638">
    <property type="entry name" value="DnaA_N"/>
    <property type="match status" value="1"/>
</dbReference>
<dbReference type="Pfam" id="PF22688">
    <property type="entry name" value="Hda_lid"/>
    <property type="match status" value="1"/>
</dbReference>
<dbReference type="PRINTS" id="PR00051">
    <property type="entry name" value="DNAA"/>
</dbReference>
<dbReference type="SMART" id="SM00382">
    <property type="entry name" value="AAA"/>
    <property type="match status" value="1"/>
</dbReference>
<dbReference type="SMART" id="SM00760">
    <property type="entry name" value="Bac_DnaA_C"/>
    <property type="match status" value="1"/>
</dbReference>
<dbReference type="SUPFAM" id="SSF52540">
    <property type="entry name" value="P-loop containing nucleoside triphosphate hydrolases"/>
    <property type="match status" value="1"/>
</dbReference>
<dbReference type="SUPFAM" id="SSF48295">
    <property type="entry name" value="TrpR-like"/>
    <property type="match status" value="1"/>
</dbReference>
<dbReference type="PROSITE" id="PS01008">
    <property type="entry name" value="DNAA"/>
    <property type="match status" value="1"/>
</dbReference>
<sequence length="461" mass="52289">MDHSPWQRCLSVLQEELPAQQFSMWIRPLQCVINDNVMTLYAPNRFVLDWVRDKYVNRINELLTINESNNPLLLRFDVGSKPTIDNSVTNSPVSRNTGGNESLFAKATSAPKVAEPESNIPKKTNVRLNYTFENFVEGKSNQLARAAASQVADNPGTAYNPLFIYGGTGLGKTHLLHAVGNGILLNKPNAKIAYMHSERFVQDMVRALQNNAMEKFKQYYRSVDALLIDDIQFFAGKERTQEEFFHTFNALLEGNQQVILTSDRYPKEINGVDDRLKSRFGWGLTLAIEPPELETRVAILKRKAQESQINLADEVAFFIAKRLRSNVRELEGALNRVIANANFTGRAITIDFVREALRDLLALQDKLVTIDNIQRTVAEYYKIKIADLLSKRRNRSVARPRQIAMALSKELTNHSLPEIGDAFGGRDHTTVLHACRKVKSLREETHDIKEDYSNLIRTLSS</sequence>
<protein>
    <recommendedName>
        <fullName evidence="1">Chromosomal replication initiator protein DnaA</fullName>
    </recommendedName>
</protein>
<proteinExistence type="inferred from homology"/>
<name>DNAA_COLP3</name>
<accession>Q48AS7</accession>
<reference key="1">
    <citation type="journal article" date="2005" name="Proc. Natl. Acad. Sci. U.S.A.">
        <title>The psychrophilic lifestyle as revealed by the genome sequence of Colwellia psychrerythraea 34H through genomic and proteomic analyses.</title>
        <authorList>
            <person name="Methe B.A."/>
            <person name="Nelson K.E."/>
            <person name="Deming J.W."/>
            <person name="Momen B."/>
            <person name="Melamud E."/>
            <person name="Zhang X."/>
            <person name="Moult J."/>
            <person name="Madupu R."/>
            <person name="Nelson W.C."/>
            <person name="Dodson R.J."/>
            <person name="Brinkac L.M."/>
            <person name="Daugherty S.C."/>
            <person name="Durkin A.S."/>
            <person name="DeBoy R.T."/>
            <person name="Kolonay J.F."/>
            <person name="Sullivan S.A."/>
            <person name="Zhou L."/>
            <person name="Davidsen T.M."/>
            <person name="Wu M."/>
            <person name="Huston A.L."/>
            <person name="Lewis M."/>
            <person name="Weaver B."/>
            <person name="Weidman J.F."/>
            <person name="Khouri H."/>
            <person name="Utterback T.R."/>
            <person name="Feldblyum T.V."/>
            <person name="Fraser C.M."/>
        </authorList>
    </citation>
    <scope>NUCLEOTIDE SEQUENCE [LARGE SCALE GENOMIC DNA]</scope>
    <source>
        <strain>34H / ATCC BAA-681</strain>
    </source>
</reference>
<evidence type="ECO:0000255" key="1">
    <source>
        <dbReference type="HAMAP-Rule" id="MF_00377"/>
    </source>
</evidence>